<evidence type="ECO:0000255" key="1">
    <source>
        <dbReference type="HAMAP-Rule" id="MF_01331"/>
    </source>
</evidence>
<evidence type="ECO:0000256" key="2">
    <source>
        <dbReference type="SAM" id="MobiDB-lite"/>
    </source>
</evidence>
<evidence type="ECO:0000305" key="3"/>
<accession>P61180</accession>
<accession>A0A1R3XWK3</accession>
<accession>O08119</accession>
<accession>P95054</accession>
<accession>X2BFW8</accession>
<dbReference type="EMBL" id="Y13228">
    <property type="protein sequence ID" value="CAA73677.1"/>
    <property type="molecule type" value="Genomic_DNA"/>
</dbReference>
<dbReference type="EMBL" id="LT708304">
    <property type="protein sequence ID" value="SIT99325.1"/>
    <property type="molecule type" value="Genomic_DNA"/>
</dbReference>
<dbReference type="RefSeq" id="NP_854384.1">
    <property type="nucleotide sequence ID" value="NC_002945.3"/>
</dbReference>
<dbReference type="RefSeq" id="WP_003403587.1">
    <property type="nucleotide sequence ID" value="NC_002945.4"/>
</dbReference>
<dbReference type="SMR" id="P61180"/>
<dbReference type="KEGG" id="mbo:BQ2027_MB0726"/>
<dbReference type="PATRIC" id="fig|233413.5.peg.792"/>
<dbReference type="Proteomes" id="UP000001419">
    <property type="component" value="Chromosome"/>
</dbReference>
<dbReference type="GO" id="GO:0022625">
    <property type="term" value="C:cytosolic large ribosomal subunit"/>
    <property type="evidence" value="ECO:0007669"/>
    <property type="project" value="TreeGrafter"/>
</dbReference>
<dbReference type="GO" id="GO:0019843">
    <property type="term" value="F:rRNA binding"/>
    <property type="evidence" value="ECO:0007669"/>
    <property type="project" value="UniProtKB-UniRule"/>
</dbReference>
<dbReference type="GO" id="GO:0003735">
    <property type="term" value="F:structural constituent of ribosome"/>
    <property type="evidence" value="ECO:0007669"/>
    <property type="project" value="InterPro"/>
</dbReference>
<dbReference type="GO" id="GO:0006412">
    <property type="term" value="P:translation"/>
    <property type="evidence" value="ECO:0007669"/>
    <property type="project" value="UniProtKB-UniRule"/>
</dbReference>
<dbReference type="CDD" id="cd00336">
    <property type="entry name" value="Ribosomal_L22"/>
    <property type="match status" value="1"/>
</dbReference>
<dbReference type="FunFam" id="3.90.470.10:FF:000002">
    <property type="entry name" value="50S ribosomal protein L22"/>
    <property type="match status" value="1"/>
</dbReference>
<dbReference type="Gene3D" id="3.90.470.10">
    <property type="entry name" value="Ribosomal protein L22/L17"/>
    <property type="match status" value="1"/>
</dbReference>
<dbReference type="HAMAP" id="MF_01331_B">
    <property type="entry name" value="Ribosomal_uL22_B"/>
    <property type="match status" value="1"/>
</dbReference>
<dbReference type="InterPro" id="IPR001063">
    <property type="entry name" value="Ribosomal_uL22"/>
</dbReference>
<dbReference type="InterPro" id="IPR005727">
    <property type="entry name" value="Ribosomal_uL22_bac/chlpt-type"/>
</dbReference>
<dbReference type="InterPro" id="IPR047867">
    <property type="entry name" value="Ribosomal_uL22_bac/org-type"/>
</dbReference>
<dbReference type="InterPro" id="IPR018260">
    <property type="entry name" value="Ribosomal_uL22_CS"/>
</dbReference>
<dbReference type="InterPro" id="IPR036394">
    <property type="entry name" value="Ribosomal_uL22_sf"/>
</dbReference>
<dbReference type="NCBIfam" id="TIGR01044">
    <property type="entry name" value="rplV_bact"/>
    <property type="match status" value="1"/>
</dbReference>
<dbReference type="PANTHER" id="PTHR13501">
    <property type="entry name" value="CHLOROPLAST 50S RIBOSOMAL PROTEIN L22-RELATED"/>
    <property type="match status" value="1"/>
</dbReference>
<dbReference type="PANTHER" id="PTHR13501:SF8">
    <property type="entry name" value="LARGE RIBOSOMAL SUBUNIT PROTEIN UL22M"/>
    <property type="match status" value="1"/>
</dbReference>
<dbReference type="Pfam" id="PF00237">
    <property type="entry name" value="Ribosomal_L22"/>
    <property type="match status" value="1"/>
</dbReference>
<dbReference type="SUPFAM" id="SSF54843">
    <property type="entry name" value="Ribosomal protein L22"/>
    <property type="match status" value="1"/>
</dbReference>
<dbReference type="PROSITE" id="PS00464">
    <property type="entry name" value="RIBOSOMAL_L22"/>
    <property type="match status" value="1"/>
</dbReference>
<organism>
    <name type="scientific">Mycobacterium bovis (strain ATCC BAA-935 / AF2122/97)</name>
    <dbReference type="NCBI Taxonomy" id="233413"/>
    <lineage>
        <taxon>Bacteria</taxon>
        <taxon>Bacillati</taxon>
        <taxon>Actinomycetota</taxon>
        <taxon>Actinomycetes</taxon>
        <taxon>Mycobacteriales</taxon>
        <taxon>Mycobacteriaceae</taxon>
        <taxon>Mycobacterium</taxon>
        <taxon>Mycobacterium tuberculosis complex</taxon>
    </lineage>
</organism>
<comment type="function">
    <text evidence="1">This protein binds specifically to 23S rRNA; its binding is stimulated by other ribosomal proteins, e.g. L4, L17, and L20. It is important during the early stages of 50S assembly. It makes multiple contacts with different domains of the 23S rRNA in the assembled 50S subunit and ribosome (By similarity).</text>
</comment>
<comment type="function">
    <text evidence="1">The globular domain of the protein is located near the polypeptide exit tunnel on the outside of the subunit, while an extended beta-hairpin is found that lines the wall of the exit tunnel in the center of the 70S ribosome.</text>
</comment>
<comment type="subunit">
    <text evidence="1">Part of the 50S ribosomal subunit.</text>
</comment>
<comment type="similarity">
    <text evidence="1">Belongs to the universal ribosomal protein uL22 family.</text>
</comment>
<feature type="chain" id="PRO_0000125174" description="Large ribosomal subunit protein uL22">
    <location>
        <begin position="1"/>
        <end position="197"/>
    </location>
</feature>
<feature type="region of interest" description="Disordered" evidence="2">
    <location>
        <begin position="118"/>
        <end position="197"/>
    </location>
</feature>
<feature type="compositionally biased region" description="Low complexity" evidence="2">
    <location>
        <begin position="149"/>
        <end position="165"/>
    </location>
</feature>
<feature type="compositionally biased region" description="Basic residues" evidence="2">
    <location>
        <begin position="172"/>
        <end position="183"/>
    </location>
</feature>
<feature type="compositionally biased region" description="Low complexity" evidence="2">
    <location>
        <begin position="184"/>
        <end position="197"/>
    </location>
</feature>
<keyword id="KW-1185">Reference proteome</keyword>
<keyword id="KW-0687">Ribonucleoprotein</keyword>
<keyword id="KW-0689">Ribosomal protein</keyword>
<keyword id="KW-0694">RNA-binding</keyword>
<keyword id="KW-0699">rRNA-binding</keyword>
<protein>
    <recommendedName>
        <fullName evidence="1">Large ribosomal subunit protein uL22</fullName>
    </recommendedName>
    <alternativeName>
        <fullName evidence="3">50S ribosomal protein L22</fullName>
    </alternativeName>
</protein>
<gene>
    <name evidence="1" type="primary">rplV</name>
    <name type="ordered locus">BQ2027_MB0726</name>
</gene>
<proteinExistence type="inferred from homology"/>
<reference key="1">
    <citation type="journal article" date="1997" name="Mol. Microbiol.">
        <title>The role of ribosomal RNAs in macrolide resistance.</title>
        <authorList>
            <person name="Sander P."/>
            <person name="Prammananan T."/>
            <person name="Meier A."/>
            <person name="Frischkorn K."/>
            <person name="Boettger E.C."/>
        </authorList>
    </citation>
    <scope>NUCLEOTIDE SEQUENCE [GENOMIC DNA]</scope>
    <source>
        <strain>BCG</strain>
    </source>
</reference>
<reference key="2">
    <citation type="journal article" date="2003" name="Proc. Natl. Acad. Sci. U.S.A.">
        <title>The complete genome sequence of Mycobacterium bovis.</title>
        <authorList>
            <person name="Garnier T."/>
            <person name="Eiglmeier K."/>
            <person name="Camus J.-C."/>
            <person name="Medina N."/>
            <person name="Mansoor H."/>
            <person name="Pryor M."/>
            <person name="Duthoy S."/>
            <person name="Grondin S."/>
            <person name="Lacroix C."/>
            <person name="Monsempe C."/>
            <person name="Simon S."/>
            <person name="Harris B."/>
            <person name="Atkin R."/>
            <person name="Doggett J."/>
            <person name="Mayes R."/>
            <person name="Keating L."/>
            <person name="Wheeler P.R."/>
            <person name="Parkhill J."/>
            <person name="Barrell B.G."/>
            <person name="Cole S.T."/>
            <person name="Gordon S.V."/>
            <person name="Hewinson R.G."/>
        </authorList>
    </citation>
    <scope>NUCLEOTIDE SEQUENCE [LARGE SCALE GENOMIC DNA]</scope>
    <source>
        <strain>ATCC BAA-935 / AF2122/97</strain>
    </source>
</reference>
<reference key="3">
    <citation type="journal article" date="2017" name="Genome Announc.">
        <title>Updated reference genome sequence and annotation of Mycobacterium bovis AF2122/97.</title>
        <authorList>
            <person name="Malone K.M."/>
            <person name="Farrell D."/>
            <person name="Stuber T.P."/>
            <person name="Schubert O.T."/>
            <person name="Aebersold R."/>
            <person name="Robbe-Austerman S."/>
            <person name="Gordon S.V."/>
        </authorList>
    </citation>
    <scope>NUCLEOTIDE SEQUENCE [LARGE SCALE GENOMIC DNA]</scope>
    <scope>GENOME REANNOTATION</scope>
    <source>
        <strain>ATCC BAA-935 / AF2122/97</strain>
    </source>
</reference>
<sequence length="197" mass="20380">MTAATKATEYPSAVAKARFVRVSPRKARRVIDLVRGRSVSDALDILRWAPQAASGPVAKVIASAAANAQNNGGLDPATLVVATVYADQGPTAKRIRPRAQGRAFRIRRRTSHITVVVESRPAKDQRSAKSSRARRTEASKAASKVGATAPAKKAAAKAPAKKAPASSGVKKTPAKKAPAKKAPAKASETSAAKGGSD</sequence>
<name>RL22_MYCBO</name>